<proteinExistence type="inferred from homology"/>
<gene>
    <name evidence="1" type="primary">glyA</name>
    <name type="ordered locus">FTT_1241</name>
</gene>
<name>GLYA_FRATT</name>
<reference key="1">
    <citation type="journal article" date="2005" name="Nat. Genet.">
        <title>The complete genome sequence of Francisella tularensis, the causative agent of tularemia.</title>
        <authorList>
            <person name="Larsson P."/>
            <person name="Oyston P.C.F."/>
            <person name="Chain P."/>
            <person name="Chu M.C."/>
            <person name="Duffield M."/>
            <person name="Fuxelius H.-H."/>
            <person name="Garcia E."/>
            <person name="Haelltorp G."/>
            <person name="Johansson D."/>
            <person name="Isherwood K.E."/>
            <person name="Karp P.D."/>
            <person name="Larsson E."/>
            <person name="Liu Y."/>
            <person name="Michell S."/>
            <person name="Prior J."/>
            <person name="Prior R."/>
            <person name="Malfatti S."/>
            <person name="Sjoestedt A."/>
            <person name="Svensson K."/>
            <person name="Thompson N."/>
            <person name="Vergez L."/>
            <person name="Wagg J.K."/>
            <person name="Wren B.W."/>
            <person name="Lindler L.E."/>
            <person name="Andersson S.G.E."/>
            <person name="Forsman M."/>
            <person name="Titball R.W."/>
        </authorList>
    </citation>
    <scope>NUCLEOTIDE SEQUENCE [LARGE SCALE GENOMIC DNA]</scope>
    <source>
        <strain>SCHU S4 / Schu 4</strain>
    </source>
</reference>
<protein>
    <recommendedName>
        <fullName evidence="1">Serine hydroxymethyltransferase</fullName>
        <shortName evidence="1">SHMT</shortName>
        <shortName evidence="1">Serine methylase</shortName>
        <ecNumber evidence="1">2.1.2.1</ecNumber>
    </recommendedName>
</protein>
<keyword id="KW-0028">Amino-acid biosynthesis</keyword>
<keyword id="KW-0963">Cytoplasm</keyword>
<keyword id="KW-0554">One-carbon metabolism</keyword>
<keyword id="KW-0663">Pyridoxal phosphate</keyword>
<keyword id="KW-1185">Reference proteome</keyword>
<keyword id="KW-0808">Transferase</keyword>
<sequence>MFSFEKNSLKNTDKEIFDAIELEVKRQHEHVELIASENYASPAVMEAQGSQLTNKYAEGYHGKRYYGGCEFVDIAEKLAIERAQQLFGVDYANVQPHSGSQANAAVYNAVLKPGDTVLGMDLGAGGHLTHGSKVNFSGKIYNSIQYGLDENGDIDYKQVAQLAKEHKPKMIIAGFSAFSGIINWQKFREIADSVDAVLMADIAHVAGLVAAGVYPNPFPYVYVATTTTHKTLRGPRGGLILCNNNPELAKKFQSAIFPGIQGGPLMHVIAAKAVAFKEALEPSFVDYQKQVLKNAKAMEKVLKQRGINIISGGTSNHLLLLDITNTGFSGKEAEAALGRANITVNKNSIPNDPRSPFVTSGLRIGSPAITTRGFKEKECELVANLLADVVFNCGDEKVENETAAKVLDLCDKFPVYK</sequence>
<dbReference type="EC" id="2.1.2.1" evidence="1"/>
<dbReference type="EMBL" id="AJ749949">
    <property type="protein sequence ID" value="CAG45874.1"/>
    <property type="molecule type" value="Genomic_DNA"/>
</dbReference>
<dbReference type="RefSeq" id="WP_003021543.1">
    <property type="nucleotide sequence ID" value="NZ_CP010290.1"/>
</dbReference>
<dbReference type="RefSeq" id="YP_170199.1">
    <property type="nucleotide sequence ID" value="NC_006570.2"/>
</dbReference>
<dbReference type="SMR" id="Q5NFJ3"/>
<dbReference type="IntAct" id="Q5NFJ3">
    <property type="interactions" value="3"/>
</dbReference>
<dbReference type="STRING" id="177416.FTT_1241"/>
<dbReference type="DNASU" id="3191778"/>
<dbReference type="EnsemblBacteria" id="CAG45874">
    <property type="protein sequence ID" value="CAG45874"/>
    <property type="gene ID" value="FTT_1241"/>
</dbReference>
<dbReference type="KEGG" id="ftu:FTT_1241"/>
<dbReference type="eggNOG" id="COG0112">
    <property type="taxonomic scope" value="Bacteria"/>
</dbReference>
<dbReference type="OrthoDB" id="9803846at2"/>
<dbReference type="UniPathway" id="UPA00193"/>
<dbReference type="UniPathway" id="UPA00288">
    <property type="reaction ID" value="UER01023"/>
</dbReference>
<dbReference type="Proteomes" id="UP000001174">
    <property type="component" value="Chromosome"/>
</dbReference>
<dbReference type="GO" id="GO:0005829">
    <property type="term" value="C:cytosol"/>
    <property type="evidence" value="ECO:0007669"/>
    <property type="project" value="TreeGrafter"/>
</dbReference>
<dbReference type="GO" id="GO:0004372">
    <property type="term" value="F:glycine hydroxymethyltransferase activity"/>
    <property type="evidence" value="ECO:0007669"/>
    <property type="project" value="UniProtKB-UniRule"/>
</dbReference>
<dbReference type="GO" id="GO:0030170">
    <property type="term" value="F:pyridoxal phosphate binding"/>
    <property type="evidence" value="ECO:0007669"/>
    <property type="project" value="UniProtKB-UniRule"/>
</dbReference>
<dbReference type="GO" id="GO:0019264">
    <property type="term" value="P:glycine biosynthetic process from serine"/>
    <property type="evidence" value="ECO:0007669"/>
    <property type="project" value="UniProtKB-UniRule"/>
</dbReference>
<dbReference type="GO" id="GO:0035999">
    <property type="term" value="P:tetrahydrofolate interconversion"/>
    <property type="evidence" value="ECO:0007669"/>
    <property type="project" value="UniProtKB-UniRule"/>
</dbReference>
<dbReference type="CDD" id="cd00378">
    <property type="entry name" value="SHMT"/>
    <property type="match status" value="1"/>
</dbReference>
<dbReference type="FunFam" id="3.40.640.10:FF:000001">
    <property type="entry name" value="Serine hydroxymethyltransferase"/>
    <property type="match status" value="1"/>
</dbReference>
<dbReference type="FunFam" id="3.90.1150.10:FF:000003">
    <property type="entry name" value="Serine hydroxymethyltransferase"/>
    <property type="match status" value="1"/>
</dbReference>
<dbReference type="Gene3D" id="3.90.1150.10">
    <property type="entry name" value="Aspartate Aminotransferase, domain 1"/>
    <property type="match status" value="1"/>
</dbReference>
<dbReference type="Gene3D" id="3.40.640.10">
    <property type="entry name" value="Type I PLP-dependent aspartate aminotransferase-like (Major domain)"/>
    <property type="match status" value="1"/>
</dbReference>
<dbReference type="HAMAP" id="MF_00051">
    <property type="entry name" value="SHMT"/>
    <property type="match status" value="1"/>
</dbReference>
<dbReference type="InterPro" id="IPR015424">
    <property type="entry name" value="PyrdxlP-dep_Trfase"/>
</dbReference>
<dbReference type="InterPro" id="IPR015421">
    <property type="entry name" value="PyrdxlP-dep_Trfase_major"/>
</dbReference>
<dbReference type="InterPro" id="IPR015422">
    <property type="entry name" value="PyrdxlP-dep_Trfase_small"/>
</dbReference>
<dbReference type="InterPro" id="IPR001085">
    <property type="entry name" value="Ser_HO-MeTrfase"/>
</dbReference>
<dbReference type="InterPro" id="IPR049943">
    <property type="entry name" value="Ser_HO-MeTrfase-like"/>
</dbReference>
<dbReference type="InterPro" id="IPR019798">
    <property type="entry name" value="Ser_HO-MeTrfase_PLP_BS"/>
</dbReference>
<dbReference type="InterPro" id="IPR039429">
    <property type="entry name" value="SHMT-like_dom"/>
</dbReference>
<dbReference type="NCBIfam" id="NF000586">
    <property type="entry name" value="PRK00011.1"/>
    <property type="match status" value="1"/>
</dbReference>
<dbReference type="PANTHER" id="PTHR11680">
    <property type="entry name" value="SERINE HYDROXYMETHYLTRANSFERASE"/>
    <property type="match status" value="1"/>
</dbReference>
<dbReference type="PANTHER" id="PTHR11680:SF50">
    <property type="entry name" value="SERINE HYDROXYMETHYLTRANSFERASE"/>
    <property type="match status" value="1"/>
</dbReference>
<dbReference type="Pfam" id="PF00464">
    <property type="entry name" value="SHMT"/>
    <property type="match status" value="1"/>
</dbReference>
<dbReference type="PIRSF" id="PIRSF000412">
    <property type="entry name" value="SHMT"/>
    <property type="match status" value="1"/>
</dbReference>
<dbReference type="SUPFAM" id="SSF53383">
    <property type="entry name" value="PLP-dependent transferases"/>
    <property type="match status" value="1"/>
</dbReference>
<dbReference type="PROSITE" id="PS00096">
    <property type="entry name" value="SHMT"/>
    <property type="match status" value="1"/>
</dbReference>
<accession>Q5NFJ3</accession>
<evidence type="ECO:0000255" key="1">
    <source>
        <dbReference type="HAMAP-Rule" id="MF_00051"/>
    </source>
</evidence>
<comment type="function">
    <text evidence="1">Catalyzes the reversible interconversion of serine and glycine with tetrahydrofolate (THF) serving as the one-carbon carrier. This reaction serves as the major source of one-carbon groups required for the biosynthesis of purines, thymidylate, methionine, and other important biomolecules. Also exhibits THF-independent aldolase activity toward beta-hydroxyamino acids, producing glycine and aldehydes, via a retro-aldol mechanism.</text>
</comment>
<comment type="catalytic activity">
    <reaction evidence="1">
        <text>(6R)-5,10-methylene-5,6,7,8-tetrahydrofolate + glycine + H2O = (6S)-5,6,7,8-tetrahydrofolate + L-serine</text>
        <dbReference type="Rhea" id="RHEA:15481"/>
        <dbReference type="ChEBI" id="CHEBI:15377"/>
        <dbReference type="ChEBI" id="CHEBI:15636"/>
        <dbReference type="ChEBI" id="CHEBI:33384"/>
        <dbReference type="ChEBI" id="CHEBI:57305"/>
        <dbReference type="ChEBI" id="CHEBI:57453"/>
        <dbReference type="EC" id="2.1.2.1"/>
    </reaction>
</comment>
<comment type="cofactor">
    <cofactor evidence="1">
        <name>pyridoxal 5'-phosphate</name>
        <dbReference type="ChEBI" id="CHEBI:597326"/>
    </cofactor>
</comment>
<comment type="pathway">
    <text evidence="1">One-carbon metabolism; tetrahydrofolate interconversion.</text>
</comment>
<comment type="pathway">
    <text evidence="1">Amino-acid biosynthesis; glycine biosynthesis; glycine from L-serine: step 1/1.</text>
</comment>
<comment type="subunit">
    <text evidence="1">Homodimer.</text>
</comment>
<comment type="subcellular location">
    <subcellularLocation>
        <location evidence="1">Cytoplasm</location>
    </subcellularLocation>
</comment>
<comment type="similarity">
    <text evidence="1">Belongs to the SHMT family.</text>
</comment>
<feature type="chain" id="PRO_0000113579" description="Serine hydroxymethyltransferase">
    <location>
        <begin position="1"/>
        <end position="417"/>
    </location>
</feature>
<feature type="binding site" evidence="1">
    <location>
        <position position="122"/>
    </location>
    <ligand>
        <name>(6S)-5,6,7,8-tetrahydrofolate</name>
        <dbReference type="ChEBI" id="CHEBI:57453"/>
    </ligand>
</feature>
<feature type="binding site" evidence="1">
    <location>
        <begin position="126"/>
        <end position="128"/>
    </location>
    <ligand>
        <name>(6S)-5,6,7,8-tetrahydrofolate</name>
        <dbReference type="ChEBI" id="CHEBI:57453"/>
    </ligand>
</feature>
<feature type="binding site" evidence="1">
    <location>
        <begin position="355"/>
        <end position="357"/>
    </location>
    <ligand>
        <name>(6S)-5,6,7,8-tetrahydrofolate</name>
        <dbReference type="ChEBI" id="CHEBI:57453"/>
    </ligand>
</feature>
<feature type="site" description="Plays an important role in substrate specificity" evidence="1">
    <location>
        <position position="229"/>
    </location>
</feature>
<feature type="modified residue" description="N6-(pyridoxal phosphate)lysine" evidence="1">
    <location>
        <position position="230"/>
    </location>
</feature>
<organism>
    <name type="scientific">Francisella tularensis subsp. tularensis (strain SCHU S4 / Schu 4)</name>
    <dbReference type="NCBI Taxonomy" id="177416"/>
    <lineage>
        <taxon>Bacteria</taxon>
        <taxon>Pseudomonadati</taxon>
        <taxon>Pseudomonadota</taxon>
        <taxon>Gammaproteobacteria</taxon>
        <taxon>Thiotrichales</taxon>
        <taxon>Francisellaceae</taxon>
        <taxon>Francisella</taxon>
    </lineage>
</organism>